<proteinExistence type="inferred from homology"/>
<protein>
    <recommendedName>
        <fullName evidence="1">UvrABC system protein C</fullName>
        <shortName evidence="1">Protein UvrC</shortName>
    </recommendedName>
    <alternativeName>
        <fullName evidence="1">Excinuclease ABC subunit C</fullName>
    </alternativeName>
</protein>
<comment type="function">
    <text evidence="1">The UvrABC repair system catalyzes the recognition and processing of DNA lesions. UvrC both incises the 5' and 3' sides of the lesion. The N-terminal half is responsible for the 3' incision and the C-terminal half is responsible for the 5' incision.</text>
</comment>
<comment type="subunit">
    <text evidence="1">Interacts with UvrB in an incision complex.</text>
</comment>
<comment type="subcellular location">
    <subcellularLocation>
        <location evidence="1">Cytoplasm</location>
    </subcellularLocation>
</comment>
<comment type="similarity">
    <text evidence="1">Belongs to the UvrC family.</text>
</comment>
<evidence type="ECO:0000255" key="1">
    <source>
        <dbReference type="HAMAP-Rule" id="MF_00203"/>
    </source>
</evidence>
<keyword id="KW-0963">Cytoplasm</keyword>
<keyword id="KW-0227">DNA damage</keyword>
<keyword id="KW-0228">DNA excision</keyword>
<keyword id="KW-0234">DNA repair</keyword>
<keyword id="KW-0267">Excision nuclease</keyword>
<keyword id="KW-0742">SOS response</keyword>
<feature type="chain" id="PRO_1000099535" description="UvrABC system protein C">
    <location>
        <begin position="1"/>
        <end position="618"/>
    </location>
</feature>
<feature type="domain" description="GIY-YIG" evidence="1">
    <location>
        <begin position="20"/>
        <end position="98"/>
    </location>
</feature>
<feature type="domain" description="UVR" evidence="1">
    <location>
        <begin position="207"/>
        <end position="242"/>
    </location>
</feature>
<accession>B0RSI3</accession>
<sequence length="618" mass="67735">MSARPQADFDGKAFAARLSTAPGVYRMYAADDSLLYVGKAGALRKRVGSYFNGTPKNARLTSMLSQVARMDVTVTRSEAEALLLENQLIKSLSPRYNVSLRDDKSYPYVLLTREDWPRIALHRGPRAVNGRYFGPYAGVTAVRETLNLMHKLFKLRSCEDSVFRNRSRPCLQYQIGRCSAPCVDLVAAQDYQEAVRRATMFLEGKSDQLGEEIMHSMQQASEALEFERAARLRDLLSSLRSMQNRQYVDGRAADLDVLACATQSSQACVLLLSFRDGRNLGTRSFFPKTNGEDSAEEILAAFVSQYYAEHAPPREILLDRAIPDAELIEAALSAAAEHKVALKWNVRGERAGYLLLASRNAQLTLVTELTSQSAQHARSEALREMLGLAEQVKRVECFDISHTMGEATVASCVVFDASGPVRGQYRRFNISGITPGDDYAAMRQAIERRFRRAVEENGVLPDVLLIDGGAGQLAQAQAALADLGIENVLLVGVAKGEERRAGHEALILADGRELRPGAASPALQFIQQVRDEAHRFAITGHRGRRQKARMTSKLEDIPGIGPRRRASLLKHFGGLVGLKAAGEAEIARVEGVNAALAARIYANLHGLALPDAAGESSP</sequence>
<dbReference type="EMBL" id="AM920689">
    <property type="protein sequence ID" value="CAP51418.1"/>
    <property type="molecule type" value="Genomic_DNA"/>
</dbReference>
<dbReference type="SMR" id="B0RSI3"/>
<dbReference type="KEGG" id="xca:xcc-b100_2065"/>
<dbReference type="HOGENOM" id="CLU_014841_3_0_6"/>
<dbReference type="Proteomes" id="UP000001188">
    <property type="component" value="Chromosome"/>
</dbReference>
<dbReference type="GO" id="GO:0005737">
    <property type="term" value="C:cytoplasm"/>
    <property type="evidence" value="ECO:0007669"/>
    <property type="project" value="UniProtKB-SubCell"/>
</dbReference>
<dbReference type="GO" id="GO:0009380">
    <property type="term" value="C:excinuclease repair complex"/>
    <property type="evidence" value="ECO:0007669"/>
    <property type="project" value="InterPro"/>
</dbReference>
<dbReference type="GO" id="GO:0003677">
    <property type="term" value="F:DNA binding"/>
    <property type="evidence" value="ECO:0007669"/>
    <property type="project" value="UniProtKB-UniRule"/>
</dbReference>
<dbReference type="GO" id="GO:0009381">
    <property type="term" value="F:excinuclease ABC activity"/>
    <property type="evidence" value="ECO:0007669"/>
    <property type="project" value="UniProtKB-UniRule"/>
</dbReference>
<dbReference type="GO" id="GO:0006289">
    <property type="term" value="P:nucleotide-excision repair"/>
    <property type="evidence" value="ECO:0007669"/>
    <property type="project" value="UniProtKB-UniRule"/>
</dbReference>
<dbReference type="GO" id="GO:0009432">
    <property type="term" value="P:SOS response"/>
    <property type="evidence" value="ECO:0007669"/>
    <property type="project" value="UniProtKB-UniRule"/>
</dbReference>
<dbReference type="CDD" id="cd10434">
    <property type="entry name" value="GIY-YIG_UvrC_Cho"/>
    <property type="match status" value="1"/>
</dbReference>
<dbReference type="FunFam" id="1.10.150.20:FF:000005">
    <property type="entry name" value="UvrABC system protein C"/>
    <property type="match status" value="1"/>
</dbReference>
<dbReference type="FunFam" id="3.30.420.340:FF:000001">
    <property type="entry name" value="UvrABC system protein C"/>
    <property type="match status" value="1"/>
</dbReference>
<dbReference type="FunFam" id="3.40.1440.10:FF:000001">
    <property type="entry name" value="UvrABC system protein C"/>
    <property type="match status" value="1"/>
</dbReference>
<dbReference type="Gene3D" id="1.10.150.20">
    <property type="entry name" value="5' to 3' exonuclease, C-terminal subdomain"/>
    <property type="match status" value="1"/>
</dbReference>
<dbReference type="Gene3D" id="3.40.1440.10">
    <property type="entry name" value="GIY-YIG endonuclease"/>
    <property type="match status" value="1"/>
</dbReference>
<dbReference type="Gene3D" id="4.10.860.10">
    <property type="entry name" value="UVR domain"/>
    <property type="match status" value="1"/>
</dbReference>
<dbReference type="Gene3D" id="3.30.420.340">
    <property type="entry name" value="UvrC, RNAse H endonuclease domain"/>
    <property type="match status" value="1"/>
</dbReference>
<dbReference type="HAMAP" id="MF_00203">
    <property type="entry name" value="UvrC"/>
    <property type="match status" value="1"/>
</dbReference>
<dbReference type="InterPro" id="IPR000305">
    <property type="entry name" value="GIY-YIG_endonuc"/>
</dbReference>
<dbReference type="InterPro" id="IPR035901">
    <property type="entry name" value="GIY-YIG_endonuc_sf"/>
</dbReference>
<dbReference type="InterPro" id="IPR047296">
    <property type="entry name" value="GIY-YIG_UvrC_Cho"/>
</dbReference>
<dbReference type="InterPro" id="IPR003583">
    <property type="entry name" value="Hlx-hairpin-Hlx_DNA-bd_motif"/>
</dbReference>
<dbReference type="InterPro" id="IPR010994">
    <property type="entry name" value="RuvA_2-like"/>
</dbReference>
<dbReference type="InterPro" id="IPR001943">
    <property type="entry name" value="UVR_dom"/>
</dbReference>
<dbReference type="InterPro" id="IPR036876">
    <property type="entry name" value="UVR_dom_sf"/>
</dbReference>
<dbReference type="InterPro" id="IPR050066">
    <property type="entry name" value="UvrABC_protein_C"/>
</dbReference>
<dbReference type="InterPro" id="IPR004791">
    <property type="entry name" value="UvrC"/>
</dbReference>
<dbReference type="InterPro" id="IPR001162">
    <property type="entry name" value="UvrC_RNase_H_dom"/>
</dbReference>
<dbReference type="InterPro" id="IPR038476">
    <property type="entry name" value="UvrC_RNase_H_dom_sf"/>
</dbReference>
<dbReference type="NCBIfam" id="TIGR00194">
    <property type="entry name" value="uvrC"/>
    <property type="match status" value="1"/>
</dbReference>
<dbReference type="PANTHER" id="PTHR30562:SF1">
    <property type="entry name" value="UVRABC SYSTEM PROTEIN C"/>
    <property type="match status" value="1"/>
</dbReference>
<dbReference type="PANTHER" id="PTHR30562">
    <property type="entry name" value="UVRC/OXIDOREDUCTASE"/>
    <property type="match status" value="1"/>
</dbReference>
<dbReference type="Pfam" id="PF01541">
    <property type="entry name" value="GIY-YIG"/>
    <property type="match status" value="1"/>
</dbReference>
<dbReference type="Pfam" id="PF14520">
    <property type="entry name" value="HHH_5"/>
    <property type="match status" value="1"/>
</dbReference>
<dbReference type="Pfam" id="PF02151">
    <property type="entry name" value="UVR"/>
    <property type="match status" value="1"/>
</dbReference>
<dbReference type="Pfam" id="PF22920">
    <property type="entry name" value="UvrC_RNaseH"/>
    <property type="match status" value="1"/>
</dbReference>
<dbReference type="Pfam" id="PF08459">
    <property type="entry name" value="UvrC_RNaseH_dom"/>
    <property type="match status" value="1"/>
</dbReference>
<dbReference type="SMART" id="SM00465">
    <property type="entry name" value="GIYc"/>
    <property type="match status" value="1"/>
</dbReference>
<dbReference type="SMART" id="SM00278">
    <property type="entry name" value="HhH1"/>
    <property type="match status" value="2"/>
</dbReference>
<dbReference type="SUPFAM" id="SSF46600">
    <property type="entry name" value="C-terminal UvrC-binding domain of UvrB"/>
    <property type="match status" value="1"/>
</dbReference>
<dbReference type="SUPFAM" id="SSF82771">
    <property type="entry name" value="GIY-YIG endonuclease"/>
    <property type="match status" value="1"/>
</dbReference>
<dbReference type="SUPFAM" id="SSF47781">
    <property type="entry name" value="RuvA domain 2-like"/>
    <property type="match status" value="1"/>
</dbReference>
<dbReference type="PROSITE" id="PS50164">
    <property type="entry name" value="GIY_YIG"/>
    <property type="match status" value="1"/>
</dbReference>
<dbReference type="PROSITE" id="PS50151">
    <property type="entry name" value="UVR"/>
    <property type="match status" value="1"/>
</dbReference>
<dbReference type="PROSITE" id="PS50165">
    <property type="entry name" value="UVRC"/>
    <property type="match status" value="1"/>
</dbReference>
<organism>
    <name type="scientific">Xanthomonas campestris pv. campestris (strain B100)</name>
    <dbReference type="NCBI Taxonomy" id="509169"/>
    <lineage>
        <taxon>Bacteria</taxon>
        <taxon>Pseudomonadati</taxon>
        <taxon>Pseudomonadota</taxon>
        <taxon>Gammaproteobacteria</taxon>
        <taxon>Lysobacterales</taxon>
        <taxon>Lysobacteraceae</taxon>
        <taxon>Xanthomonas</taxon>
    </lineage>
</organism>
<name>UVRC_XANCB</name>
<gene>
    <name evidence="1" type="primary">uvrC</name>
    <name type="ordered locus">xcc-b100_2065</name>
</gene>
<reference key="1">
    <citation type="journal article" date="2008" name="J. Biotechnol.">
        <title>The genome of Xanthomonas campestris pv. campestris B100 and its use for the reconstruction of metabolic pathways involved in xanthan biosynthesis.</title>
        <authorList>
            <person name="Vorhoelter F.-J."/>
            <person name="Schneiker S."/>
            <person name="Goesmann A."/>
            <person name="Krause L."/>
            <person name="Bekel T."/>
            <person name="Kaiser O."/>
            <person name="Linke B."/>
            <person name="Patschkowski T."/>
            <person name="Rueckert C."/>
            <person name="Schmid J."/>
            <person name="Sidhu V.K."/>
            <person name="Sieber V."/>
            <person name="Tauch A."/>
            <person name="Watt S.A."/>
            <person name="Weisshaar B."/>
            <person name="Becker A."/>
            <person name="Niehaus K."/>
            <person name="Puehler A."/>
        </authorList>
    </citation>
    <scope>NUCLEOTIDE SEQUENCE [LARGE SCALE GENOMIC DNA]</scope>
    <source>
        <strain>B100</strain>
    </source>
</reference>